<organism>
    <name type="scientific">Bos taurus</name>
    <name type="common">Bovine</name>
    <dbReference type="NCBI Taxonomy" id="9913"/>
    <lineage>
        <taxon>Eukaryota</taxon>
        <taxon>Metazoa</taxon>
        <taxon>Chordata</taxon>
        <taxon>Craniata</taxon>
        <taxon>Vertebrata</taxon>
        <taxon>Euteleostomi</taxon>
        <taxon>Mammalia</taxon>
        <taxon>Eutheria</taxon>
        <taxon>Laurasiatheria</taxon>
        <taxon>Artiodactyla</taxon>
        <taxon>Ruminantia</taxon>
        <taxon>Pecora</taxon>
        <taxon>Bovidae</taxon>
        <taxon>Bovinae</taxon>
        <taxon>Bos</taxon>
    </lineage>
</organism>
<reference key="1">
    <citation type="submission" date="2005-08" db="EMBL/GenBank/DDBJ databases">
        <authorList>
            <consortium name="NIH - Mammalian Gene Collection (MGC) project"/>
        </authorList>
    </citation>
    <scope>NUCLEOTIDE SEQUENCE [LARGE SCALE MRNA]</scope>
    <source>
        <strain>Crossbred X Angus</strain>
        <tissue>Liver</tissue>
    </source>
</reference>
<feature type="chain" id="PRO_0000321558" description="Translation machinery-associated protein 16">
    <location>
        <begin position="1"/>
        <end position="203"/>
    </location>
</feature>
<feature type="region of interest" description="Disordered" evidence="2">
    <location>
        <begin position="1"/>
        <end position="40"/>
    </location>
</feature>
<feature type="modified residue" description="ADP-ribosylserine" evidence="1">
    <location>
        <position position="9"/>
    </location>
</feature>
<gene>
    <name type="primary">TMA16</name>
</gene>
<evidence type="ECO:0000250" key="1">
    <source>
        <dbReference type="UniProtKB" id="Q96EY4"/>
    </source>
</evidence>
<evidence type="ECO:0000256" key="2">
    <source>
        <dbReference type="SAM" id="MobiDB-lite"/>
    </source>
</evidence>
<evidence type="ECO:0000305" key="3"/>
<keyword id="KW-0013">ADP-ribosylation</keyword>
<keyword id="KW-0539">Nucleus</keyword>
<keyword id="KW-1185">Reference proteome</keyword>
<keyword id="KW-0690">Ribosome biogenesis</keyword>
<proteinExistence type="evidence at transcript level"/>
<comment type="function">
    <text evidence="1">Involved in the biogenesis of the 60S ribosomal subunit in the nucleus.</text>
</comment>
<comment type="subunit">
    <text evidence="1">Associates with pre-60S ribosomal particles.</text>
</comment>
<comment type="subcellular location">
    <subcellularLocation>
        <location evidence="1">Nucleus</location>
    </subcellularLocation>
</comment>
<comment type="similarity">
    <text evidence="3">Belongs to the TMA16 family.</text>
</comment>
<dbReference type="EMBL" id="BC102541">
    <property type="protein sequence ID" value="AAI02542.1"/>
    <property type="molecule type" value="mRNA"/>
</dbReference>
<dbReference type="RefSeq" id="NP_001030206.1">
    <property type="nucleotide sequence ID" value="NM_001035034.2"/>
</dbReference>
<dbReference type="SMR" id="Q3T071"/>
<dbReference type="FunCoup" id="Q3T071">
    <property type="interactions" value="2197"/>
</dbReference>
<dbReference type="STRING" id="9913.ENSBTAP00000061958"/>
<dbReference type="PaxDb" id="9913-ENSBTAP00000016796"/>
<dbReference type="GeneID" id="506277"/>
<dbReference type="KEGG" id="bta:506277"/>
<dbReference type="CTD" id="55319"/>
<dbReference type="eggNOG" id="ENOG502RXYZ">
    <property type="taxonomic scope" value="Eukaryota"/>
</dbReference>
<dbReference type="InParanoid" id="Q3T071"/>
<dbReference type="OrthoDB" id="270284at2759"/>
<dbReference type="Proteomes" id="UP000009136">
    <property type="component" value="Unplaced"/>
</dbReference>
<dbReference type="GO" id="GO:0005634">
    <property type="term" value="C:nucleus"/>
    <property type="evidence" value="ECO:0000318"/>
    <property type="project" value="GO_Central"/>
</dbReference>
<dbReference type="GO" id="GO:1990275">
    <property type="term" value="F:preribosome binding"/>
    <property type="evidence" value="ECO:0000250"/>
    <property type="project" value="UniProtKB"/>
</dbReference>
<dbReference type="GO" id="GO:0042273">
    <property type="term" value="P:ribosomal large subunit biogenesis"/>
    <property type="evidence" value="ECO:0000250"/>
    <property type="project" value="UniProtKB"/>
</dbReference>
<dbReference type="FunFam" id="1.20.1440.170:FF:000001">
    <property type="entry name" value="Translation machinery-associated 16 homolog"/>
    <property type="match status" value="1"/>
</dbReference>
<dbReference type="Gene3D" id="1.20.1440.170">
    <property type="entry name" value="Translation machinery-associated protein 16-like"/>
    <property type="match status" value="1"/>
</dbReference>
<dbReference type="InterPro" id="IPR021346">
    <property type="entry name" value="Tma16"/>
</dbReference>
<dbReference type="InterPro" id="IPR038356">
    <property type="entry name" value="Tma16_sf"/>
</dbReference>
<dbReference type="PANTHER" id="PTHR13349">
    <property type="entry name" value="TRANSLATION MACHINERY-ASSOCIATED PROTEIN 16"/>
    <property type="match status" value="1"/>
</dbReference>
<dbReference type="PANTHER" id="PTHR13349:SF2">
    <property type="entry name" value="TRANSLATION MACHINERY-ASSOCIATED PROTEIN 16"/>
    <property type="match status" value="1"/>
</dbReference>
<dbReference type="Pfam" id="PF11176">
    <property type="entry name" value="Tma16"/>
    <property type="match status" value="1"/>
</dbReference>
<name>TMA16_BOVIN</name>
<protein>
    <recommendedName>
        <fullName>Translation machinery-associated protein 16</fullName>
    </recommendedName>
</protein>
<sequence>MPKAPKGKSVGQEKKVIHPYSRKAAQITRKAHKQEKKEELKNEKALRLNLIGEKLQWFQNHLDPKKVGYSKRDACELIERYLNRFSSELEQIELRNSFKDRQGRRHCSREAAIRQTLEREQRQYQAHGLEIPDILNADNLKTFREWDFDLKKLPNIKMRKVCASDAVPKKCKKKAVTTIDGDLGELELKDESSDTDEEMTAVA</sequence>
<accession>Q3T071</accession>